<feature type="chain" id="PRO_0000315762" description="Grifin">
    <location>
        <begin position="1"/>
        <end position="144"/>
    </location>
</feature>
<feature type="domain" description="Galectin" evidence="3">
    <location>
        <begin position="5"/>
        <end position="133"/>
    </location>
</feature>
<feature type="modified residue" description="Phosphoserine" evidence="2">
    <location>
        <position position="138"/>
    </location>
</feature>
<reference key="1">
    <citation type="journal article" date="2003" name="Nature">
        <title>The DNA sequence of human chromosome 7.</title>
        <authorList>
            <person name="Hillier L.W."/>
            <person name="Fulton R.S."/>
            <person name="Fulton L.A."/>
            <person name="Graves T.A."/>
            <person name="Pepin K.H."/>
            <person name="Wagner-McPherson C."/>
            <person name="Layman D."/>
            <person name="Maas J."/>
            <person name="Jaeger S."/>
            <person name="Walker R."/>
            <person name="Wylie K."/>
            <person name="Sekhon M."/>
            <person name="Becker M.C."/>
            <person name="O'Laughlin M.D."/>
            <person name="Schaller M.E."/>
            <person name="Fewell G.A."/>
            <person name="Delehaunty K.D."/>
            <person name="Miner T.L."/>
            <person name="Nash W.E."/>
            <person name="Cordes M."/>
            <person name="Du H."/>
            <person name="Sun H."/>
            <person name="Edwards J."/>
            <person name="Bradshaw-Cordum H."/>
            <person name="Ali J."/>
            <person name="Andrews S."/>
            <person name="Isak A."/>
            <person name="Vanbrunt A."/>
            <person name="Nguyen C."/>
            <person name="Du F."/>
            <person name="Lamar B."/>
            <person name="Courtney L."/>
            <person name="Kalicki J."/>
            <person name="Ozersky P."/>
            <person name="Bielicki L."/>
            <person name="Scott K."/>
            <person name="Holmes A."/>
            <person name="Harkins R."/>
            <person name="Harris A."/>
            <person name="Strong C.M."/>
            <person name="Hou S."/>
            <person name="Tomlinson C."/>
            <person name="Dauphin-Kohlberg S."/>
            <person name="Kozlowicz-Reilly A."/>
            <person name="Leonard S."/>
            <person name="Rohlfing T."/>
            <person name="Rock S.M."/>
            <person name="Tin-Wollam A.-M."/>
            <person name="Abbott A."/>
            <person name="Minx P."/>
            <person name="Maupin R."/>
            <person name="Strowmatt C."/>
            <person name="Latreille P."/>
            <person name="Miller N."/>
            <person name="Johnson D."/>
            <person name="Murray J."/>
            <person name="Woessner J.P."/>
            <person name="Wendl M.C."/>
            <person name="Yang S.-P."/>
            <person name="Schultz B.R."/>
            <person name="Wallis J.W."/>
            <person name="Spieth J."/>
            <person name="Bieri T.A."/>
            <person name="Nelson J.O."/>
            <person name="Berkowicz N."/>
            <person name="Wohldmann P.E."/>
            <person name="Cook L.L."/>
            <person name="Hickenbotham M.T."/>
            <person name="Eldred J."/>
            <person name="Williams D."/>
            <person name="Bedell J.A."/>
            <person name="Mardis E.R."/>
            <person name="Clifton S.W."/>
            <person name="Chissoe S.L."/>
            <person name="Marra M.A."/>
            <person name="Raymond C."/>
            <person name="Haugen E."/>
            <person name="Gillett W."/>
            <person name="Zhou Y."/>
            <person name="James R."/>
            <person name="Phelps K."/>
            <person name="Iadanoto S."/>
            <person name="Bubb K."/>
            <person name="Simms E."/>
            <person name="Levy R."/>
            <person name="Clendenning J."/>
            <person name="Kaul R."/>
            <person name="Kent W.J."/>
            <person name="Furey T.S."/>
            <person name="Baertsch R.A."/>
            <person name="Brent M.R."/>
            <person name="Keibler E."/>
            <person name="Flicek P."/>
            <person name="Bork P."/>
            <person name="Suyama M."/>
            <person name="Bailey J.A."/>
            <person name="Portnoy M.E."/>
            <person name="Torrents D."/>
            <person name="Chinwalla A.T."/>
            <person name="Gish W.R."/>
            <person name="Eddy S.R."/>
            <person name="McPherson J.D."/>
            <person name="Olson M.V."/>
            <person name="Eichler E.E."/>
            <person name="Green E.D."/>
            <person name="Waterston R.H."/>
            <person name="Wilson R.K."/>
        </authorList>
    </citation>
    <scope>NUCLEOTIDE SEQUENCE [LARGE SCALE GENOMIC DNA]</scope>
</reference>
<reference key="2">
    <citation type="journal article" date="2003" name="Science">
        <title>Human chromosome 7: DNA sequence and biology.</title>
        <authorList>
            <person name="Scherer S.W."/>
            <person name="Cheung J."/>
            <person name="MacDonald J.R."/>
            <person name="Osborne L.R."/>
            <person name="Nakabayashi K."/>
            <person name="Herbrick J.-A."/>
            <person name="Carson A.R."/>
            <person name="Parker-Katiraee L."/>
            <person name="Skaug J."/>
            <person name="Khaja R."/>
            <person name="Zhang J."/>
            <person name="Hudek A.K."/>
            <person name="Li M."/>
            <person name="Haddad M."/>
            <person name="Duggan G.E."/>
            <person name="Fernandez B.A."/>
            <person name="Kanematsu E."/>
            <person name="Gentles S."/>
            <person name="Christopoulos C.C."/>
            <person name="Choufani S."/>
            <person name="Kwasnicka D."/>
            <person name="Zheng X.H."/>
            <person name="Lai Z."/>
            <person name="Nusskern D.R."/>
            <person name="Zhang Q."/>
            <person name="Gu Z."/>
            <person name="Lu F."/>
            <person name="Zeesman S."/>
            <person name="Nowaczyk M.J."/>
            <person name="Teshima I."/>
            <person name="Chitayat D."/>
            <person name="Shuman C."/>
            <person name="Weksberg R."/>
            <person name="Zackai E.H."/>
            <person name="Grebe T.A."/>
            <person name="Cox S.R."/>
            <person name="Kirkpatrick S.J."/>
            <person name="Rahman N."/>
            <person name="Friedman J.M."/>
            <person name="Heng H.H.Q."/>
            <person name="Pelicci P.G."/>
            <person name="Lo-Coco F."/>
            <person name="Belloni E."/>
            <person name="Shaffer L.G."/>
            <person name="Pober B."/>
            <person name="Morton C.C."/>
            <person name="Gusella J.F."/>
            <person name="Bruns G.A.P."/>
            <person name="Korf B.R."/>
            <person name="Quade B.J."/>
            <person name="Ligon A.H."/>
            <person name="Ferguson H."/>
            <person name="Higgins A.W."/>
            <person name="Leach N.T."/>
            <person name="Herrick S.R."/>
            <person name="Lemyre E."/>
            <person name="Farra C.G."/>
            <person name="Kim H.-G."/>
            <person name="Summers A.M."/>
            <person name="Gripp K.W."/>
            <person name="Roberts W."/>
            <person name="Szatmari P."/>
            <person name="Winsor E.J.T."/>
            <person name="Grzeschik K.-H."/>
            <person name="Teebi A."/>
            <person name="Minassian B.A."/>
            <person name="Kere J."/>
            <person name="Armengol L."/>
            <person name="Pujana M.A."/>
            <person name="Estivill X."/>
            <person name="Wilson M.D."/>
            <person name="Koop B.F."/>
            <person name="Tosi S."/>
            <person name="Moore G.E."/>
            <person name="Boright A.P."/>
            <person name="Zlotorynski E."/>
            <person name="Kerem B."/>
            <person name="Kroisel P.M."/>
            <person name="Petek E."/>
            <person name="Oscier D.G."/>
            <person name="Mould S.J."/>
            <person name="Doehner H."/>
            <person name="Doehner K."/>
            <person name="Rommens J.M."/>
            <person name="Vincent J.B."/>
            <person name="Venter J.C."/>
            <person name="Li P.W."/>
            <person name="Mural R.J."/>
            <person name="Adams M.D."/>
            <person name="Tsui L.-C."/>
        </authorList>
    </citation>
    <scope>NUCLEOTIDE SEQUENCE [LARGE SCALE GENOMIC DNA]</scope>
</reference>
<reference key="3">
    <citation type="journal article" date="2008" name="Biochem. Biophys. Res. Commun.">
        <title>Unlike mammalian GRIFIN, the zebrafish homologue (DrGRIFIN) represents a functional carbohydrate-binding galectin.</title>
        <authorList>
            <person name="Ahmed H."/>
            <person name="Vasta G.R."/>
        </authorList>
    </citation>
    <scope>IDENTIFICATION</scope>
</reference>
<reference key="4">
    <citation type="journal article" date="2007" name="Mol. Vis.">
        <title>A comparative gene expression profile of the whole eye from human, mouse, and guinea pig.</title>
        <authorList>
            <person name="Zhou X."/>
            <person name="Wang W."/>
            <person name="Lu F."/>
            <person name="Hu S."/>
            <person name="Jiang L."/>
            <person name="Yan D."/>
            <person name="Zhang X."/>
            <person name="Yu X."/>
            <person name="Yu J."/>
            <person name="Qu J."/>
        </authorList>
    </citation>
    <scope>TISSUE SPECIFICITY</scope>
</reference>
<evidence type="ECO:0000250" key="1"/>
<evidence type="ECO:0000250" key="2">
    <source>
        <dbReference type="UniProtKB" id="O88644"/>
    </source>
</evidence>
<evidence type="ECO:0000255" key="3">
    <source>
        <dbReference type="PROSITE-ProRule" id="PRU00639"/>
    </source>
</evidence>
<evidence type="ECO:0000269" key="4">
    <source>
    </source>
</evidence>
<evidence type="ECO:0000305" key="5"/>
<name>GRIFN_HUMAN</name>
<sequence length="144" mass="15999">MAVQSKAFCAGGLAPGWKLLVQGHADSGEDRFETNFLLETGDIAFHIKPRFSSATVVGNAFQYGRWGPEQVSSIFPLAPGEPFEIEVSWDAEHFHVYAPEHKVLQFPCRQRPLGATTRVRVLSDHCLAQVELAKRGLSWGDRGY</sequence>
<protein>
    <recommendedName>
        <fullName>Grifin</fullName>
    </recommendedName>
    <alternativeName>
        <fullName>Galectin-related inter-fiber protein</fullName>
    </alternativeName>
</protein>
<organism>
    <name type="scientific">Homo sapiens</name>
    <name type="common">Human</name>
    <dbReference type="NCBI Taxonomy" id="9606"/>
    <lineage>
        <taxon>Eukaryota</taxon>
        <taxon>Metazoa</taxon>
        <taxon>Chordata</taxon>
        <taxon>Craniata</taxon>
        <taxon>Vertebrata</taxon>
        <taxon>Euteleostomi</taxon>
        <taxon>Mammalia</taxon>
        <taxon>Eutheria</taxon>
        <taxon>Euarchontoglires</taxon>
        <taxon>Primates</taxon>
        <taxon>Haplorrhini</taxon>
        <taxon>Catarrhini</taxon>
        <taxon>Hominidae</taxon>
        <taxon>Homo</taxon>
    </lineage>
</organism>
<gene>
    <name type="primary">GRIFIN</name>
</gene>
<accession>A4D1Z8</accession>
<accession>A0A087WXP5</accession>
<dbReference type="EMBL" id="AC004840">
    <property type="status" value="NOT_ANNOTATED_CDS"/>
    <property type="molecule type" value="Genomic_DNA"/>
</dbReference>
<dbReference type="EMBL" id="KF459637">
    <property type="status" value="NOT_ANNOTATED_CDS"/>
    <property type="molecule type" value="Genomic_DNA"/>
</dbReference>
<dbReference type="EMBL" id="CH236953">
    <property type="protein sequence ID" value="EAL23956.1"/>
    <property type="status" value="ALT_SEQ"/>
    <property type="molecule type" value="Genomic_DNA"/>
</dbReference>
<dbReference type="CCDS" id="CCDS94046.1"/>
<dbReference type="RefSeq" id="NP_001381716.1">
    <property type="nucleotide sequence ID" value="NM_001394787.1"/>
</dbReference>
<dbReference type="SMR" id="A4D1Z8"/>
<dbReference type="FunCoup" id="A4D1Z8">
    <property type="interactions" value="9"/>
</dbReference>
<dbReference type="STRING" id="9606.ENSP00000481185"/>
<dbReference type="PhosphoSitePlus" id="A4D1Z8"/>
<dbReference type="BioMuta" id="GRIFIN"/>
<dbReference type="jPOST" id="A4D1Z8"/>
<dbReference type="PaxDb" id="9606-ENSP00000481185"/>
<dbReference type="Antibodypedia" id="82145">
    <property type="antibodies" value="1 antibodies from 1 providers"/>
</dbReference>
<dbReference type="Ensembl" id="ENST00000614228.2">
    <property type="protein sequence ID" value="ENSP00000481185.1"/>
    <property type="gene ID" value="ENSG00000275572.2"/>
</dbReference>
<dbReference type="GeneID" id="402635"/>
<dbReference type="MANE-Select" id="ENST00000614228.2">
    <property type="protein sequence ID" value="ENSP00000481185.1"/>
    <property type="RefSeq nucleotide sequence ID" value="NM_001394787.1"/>
    <property type="RefSeq protein sequence ID" value="NP_001381716.1"/>
</dbReference>
<dbReference type="UCSC" id="uc064bae.1">
    <property type="organism name" value="human"/>
</dbReference>
<dbReference type="AGR" id="HGNC:4577"/>
<dbReference type="GeneCards" id="GRIFIN"/>
<dbReference type="HGNC" id="HGNC:4577">
    <property type="gene designation" value="GRIFIN"/>
</dbReference>
<dbReference type="HPA" id="ENSG00000275572">
    <property type="expression patterns" value="Not detected"/>
</dbReference>
<dbReference type="MIM" id="619187">
    <property type="type" value="gene"/>
</dbReference>
<dbReference type="neXtProt" id="NX_A4D1Z8"/>
<dbReference type="OpenTargets" id="ENSG00000275572"/>
<dbReference type="VEuPathDB" id="HostDB:ENSG00000275572"/>
<dbReference type="eggNOG" id="KOG3587">
    <property type="taxonomic scope" value="Eukaryota"/>
</dbReference>
<dbReference type="GeneTree" id="ENSGT00940000162164"/>
<dbReference type="HOGENOM" id="CLU_037794_3_0_1"/>
<dbReference type="InParanoid" id="A4D1Z8"/>
<dbReference type="OMA" id="GICPGWS"/>
<dbReference type="OrthoDB" id="8112755at2759"/>
<dbReference type="PAN-GO" id="A4D1Z8">
    <property type="GO annotations" value="1 GO annotation based on evolutionary models"/>
</dbReference>
<dbReference type="ChiTaRS" id="GRIFIN">
    <property type="organism name" value="human"/>
</dbReference>
<dbReference type="Pharos" id="A4D1Z8">
    <property type="development level" value="Tdark"/>
</dbReference>
<dbReference type="PRO" id="PR:A4D1Z8"/>
<dbReference type="Proteomes" id="UP000005640">
    <property type="component" value="Chromosome 7"/>
</dbReference>
<dbReference type="RNAct" id="A4D1Z8">
    <property type="molecule type" value="protein"/>
</dbReference>
<dbReference type="Bgee" id="ENSG00000275572">
    <property type="expression patterns" value="Expressed in primordial germ cell in gonad and 77 other cell types or tissues"/>
</dbReference>
<dbReference type="GO" id="GO:0030246">
    <property type="term" value="F:carbohydrate binding"/>
    <property type="evidence" value="ECO:0000318"/>
    <property type="project" value="GO_Central"/>
</dbReference>
<dbReference type="CDD" id="cd00070">
    <property type="entry name" value="GLECT"/>
    <property type="match status" value="1"/>
</dbReference>
<dbReference type="FunFam" id="2.60.120.200:FF:000021">
    <property type="entry name" value="Galectin"/>
    <property type="match status" value="1"/>
</dbReference>
<dbReference type="Gene3D" id="2.60.120.200">
    <property type="match status" value="1"/>
</dbReference>
<dbReference type="InterPro" id="IPR013320">
    <property type="entry name" value="ConA-like_dom_sf"/>
</dbReference>
<dbReference type="InterPro" id="IPR044156">
    <property type="entry name" value="Galectin-like"/>
</dbReference>
<dbReference type="InterPro" id="IPR001079">
    <property type="entry name" value="Galectin_CRD"/>
</dbReference>
<dbReference type="PANTHER" id="PTHR11346">
    <property type="entry name" value="GALECTIN"/>
    <property type="match status" value="1"/>
</dbReference>
<dbReference type="PANTHER" id="PTHR11346:SF21">
    <property type="entry name" value="GRIFIN"/>
    <property type="match status" value="1"/>
</dbReference>
<dbReference type="Pfam" id="PF00337">
    <property type="entry name" value="Gal-bind_lectin"/>
    <property type="match status" value="1"/>
</dbReference>
<dbReference type="SMART" id="SM00908">
    <property type="entry name" value="Gal-bind_lectin"/>
    <property type="match status" value="1"/>
</dbReference>
<dbReference type="SMART" id="SM00276">
    <property type="entry name" value="GLECT"/>
    <property type="match status" value="1"/>
</dbReference>
<dbReference type="SUPFAM" id="SSF49899">
    <property type="entry name" value="Concanavalin A-like lectins/glucanases"/>
    <property type="match status" value="1"/>
</dbReference>
<dbReference type="PROSITE" id="PS51304">
    <property type="entry name" value="GALECTIN"/>
    <property type="match status" value="1"/>
</dbReference>
<comment type="subunit">
    <text evidence="1">Homodimer.</text>
</comment>
<comment type="tissue specificity">
    <text evidence="4">Not detected in lens.</text>
</comment>
<comment type="domain">
    <text evidence="1">The galectin domain is atypical and does not bind beta-galactoside sugars.</text>
</comment>
<comment type="sequence caution" evidence="5">
    <conflict type="erroneous gene model prediction">
        <sequence resource="EMBL-CDS" id="EAL23956"/>
    </conflict>
</comment>
<keyword id="KW-0430">Lectin</keyword>
<keyword id="KW-0597">Phosphoprotein</keyword>
<keyword id="KW-1185">Reference proteome</keyword>
<proteinExistence type="evidence at transcript level"/>